<proteinExistence type="inferred from homology"/>
<protein>
    <recommendedName>
        <fullName evidence="1">Ribosome-binding factor A</fullName>
    </recommendedName>
</protein>
<gene>
    <name evidence="1" type="primary">rbfA</name>
    <name type="ordered locus">Blon_2197</name>
    <name type="ordered locus">BLIJ_2271</name>
</gene>
<reference key="1">
    <citation type="journal article" date="2008" name="Proc. Natl. Acad. Sci. U.S.A.">
        <title>The genome sequence of Bifidobacterium longum subsp. infantis reveals adaptations for milk utilization within the infant microbiome.</title>
        <authorList>
            <person name="Sela D.A."/>
            <person name="Chapman J."/>
            <person name="Adeuya A."/>
            <person name="Kim J.H."/>
            <person name="Chen F."/>
            <person name="Whitehead T.R."/>
            <person name="Lapidus A."/>
            <person name="Rokhsar D.S."/>
            <person name="Lebrilla C.B."/>
            <person name="German J.B."/>
            <person name="Price N.P."/>
            <person name="Richardson P.M."/>
            <person name="Mills D.A."/>
        </authorList>
    </citation>
    <scope>NUCLEOTIDE SEQUENCE [LARGE SCALE GENOMIC DNA]</scope>
    <source>
        <strain>ATCC 15697 / DSM 20088 / JCM 1222 / NCTC 11817 / S12</strain>
    </source>
</reference>
<reference key="2">
    <citation type="journal article" date="2011" name="Nature">
        <title>Bifidobacteria can protect from enteropathogenic infection through production of acetate.</title>
        <authorList>
            <person name="Fukuda S."/>
            <person name="Toh H."/>
            <person name="Hase K."/>
            <person name="Oshima K."/>
            <person name="Nakanishi Y."/>
            <person name="Yoshimura K."/>
            <person name="Tobe T."/>
            <person name="Clarke J.M."/>
            <person name="Topping D.L."/>
            <person name="Suzuki T."/>
            <person name="Taylor T.D."/>
            <person name="Itoh K."/>
            <person name="Kikuchi J."/>
            <person name="Morita H."/>
            <person name="Hattori M."/>
            <person name="Ohno H."/>
        </authorList>
    </citation>
    <scope>NUCLEOTIDE SEQUENCE [LARGE SCALE GENOMIC DNA]</scope>
    <source>
        <strain>ATCC 15697 / DSM 20088 / JCM 1222 / NCTC 11817 / S12</strain>
    </source>
</reference>
<name>RBFA_BIFLS</name>
<sequence>MAGTNPRAARIAALIQRVVASSIERELHDKRLASITVTEVRVTNDLQIAKVYWTQLGHEGHEEGERKRAQQALDQAKGHLRSLVGHKAGLRLTPQLQFVFDEVPGEAHEIEDILAVAKKRDEELARVRATAQYAGDADPYKHDDEAEAEGDEFESDEE</sequence>
<comment type="function">
    <text evidence="1">One of several proteins that assist in the late maturation steps of the functional core of the 30S ribosomal subunit. Associates with free 30S ribosomal subunits (but not with 30S subunits that are part of 70S ribosomes or polysomes). Required for efficient processing of 16S rRNA. May interact with the 5'-terminal helix region of 16S rRNA.</text>
</comment>
<comment type="subunit">
    <text evidence="1">Monomer. Binds 30S ribosomal subunits, but not 50S ribosomal subunits or 70S ribosomes.</text>
</comment>
<comment type="subcellular location">
    <subcellularLocation>
        <location evidence="1">Cytoplasm</location>
    </subcellularLocation>
</comment>
<comment type="similarity">
    <text evidence="1">Belongs to the RbfA family.</text>
</comment>
<accession>B7GNA2</accession>
<accession>E8MN45</accession>
<feature type="chain" id="PRO_1000193233" description="Ribosome-binding factor A">
    <location>
        <begin position="1"/>
        <end position="158"/>
    </location>
</feature>
<feature type="region of interest" description="Disordered" evidence="2">
    <location>
        <begin position="130"/>
        <end position="158"/>
    </location>
</feature>
<feature type="compositionally biased region" description="Acidic residues" evidence="2">
    <location>
        <begin position="145"/>
        <end position="158"/>
    </location>
</feature>
<keyword id="KW-0963">Cytoplasm</keyword>
<keyword id="KW-0690">Ribosome biogenesis</keyword>
<evidence type="ECO:0000255" key="1">
    <source>
        <dbReference type="HAMAP-Rule" id="MF_00003"/>
    </source>
</evidence>
<evidence type="ECO:0000256" key="2">
    <source>
        <dbReference type="SAM" id="MobiDB-lite"/>
    </source>
</evidence>
<organism>
    <name type="scientific">Bifidobacterium longum subsp. infantis (strain ATCC 15697 / DSM 20088 / JCM 1222 / NCTC 11817 / S12)</name>
    <dbReference type="NCBI Taxonomy" id="391904"/>
    <lineage>
        <taxon>Bacteria</taxon>
        <taxon>Bacillati</taxon>
        <taxon>Actinomycetota</taxon>
        <taxon>Actinomycetes</taxon>
        <taxon>Bifidobacteriales</taxon>
        <taxon>Bifidobacteriaceae</taxon>
        <taxon>Bifidobacterium</taxon>
    </lineage>
</organism>
<dbReference type="EMBL" id="CP001095">
    <property type="protein sequence ID" value="ACJ53258.1"/>
    <property type="molecule type" value="Genomic_DNA"/>
</dbReference>
<dbReference type="EMBL" id="AP010889">
    <property type="protein sequence ID" value="BAJ69848.1"/>
    <property type="molecule type" value="Genomic_DNA"/>
</dbReference>
<dbReference type="RefSeq" id="WP_012578456.1">
    <property type="nucleotide sequence ID" value="NZ_JDTT01000049.1"/>
</dbReference>
<dbReference type="SMR" id="B7GNA2"/>
<dbReference type="KEGG" id="bln:Blon_2197"/>
<dbReference type="KEGG" id="blon:BLIJ_2271"/>
<dbReference type="PATRIC" id="fig|391904.8.peg.2272"/>
<dbReference type="HOGENOM" id="CLU_089475_0_1_11"/>
<dbReference type="Proteomes" id="UP000001360">
    <property type="component" value="Chromosome"/>
</dbReference>
<dbReference type="GO" id="GO:0005829">
    <property type="term" value="C:cytosol"/>
    <property type="evidence" value="ECO:0007669"/>
    <property type="project" value="TreeGrafter"/>
</dbReference>
<dbReference type="GO" id="GO:0043024">
    <property type="term" value="F:ribosomal small subunit binding"/>
    <property type="evidence" value="ECO:0007669"/>
    <property type="project" value="TreeGrafter"/>
</dbReference>
<dbReference type="GO" id="GO:0030490">
    <property type="term" value="P:maturation of SSU-rRNA"/>
    <property type="evidence" value="ECO:0007669"/>
    <property type="project" value="UniProtKB-UniRule"/>
</dbReference>
<dbReference type="Gene3D" id="3.30.300.20">
    <property type="match status" value="1"/>
</dbReference>
<dbReference type="HAMAP" id="MF_00003">
    <property type="entry name" value="RbfA"/>
    <property type="match status" value="1"/>
</dbReference>
<dbReference type="InterPro" id="IPR015946">
    <property type="entry name" value="KH_dom-like_a/b"/>
</dbReference>
<dbReference type="InterPro" id="IPR000238">
    <property type="entry name" value="RbfA"/>
</dbReference>
<dbReference type="InterPro" id="IPR023799">
    <property type="entry name" value="RbfA_dom_sf"/>
</dbReference>
<dbReference type="InterPro" id="IPR020053">
    <property type="entry name" value="Ribosome-bd_factorA_CS"/>
</dbReference>
<dbReference type="NCBIfam" id="TIGR00082">
    <property type="entry name" value="rbfA"/>
    <property type="match status" value="1"/>
</dbReference>
<dbReference type="PANTHER" id="PTHR33515">
    <property type="entry name" value="RIBOSOME-BINDING FACTOR A, CHLOROPLASTIC-RELATED"/>
    <property type="match status" value="1"/>
</dbReference>
<dbReference type="PANTHER" id="PTHR33515:SF1">
    <property type="entry name" value="RIBOSOME-BINDING FACTOR A, CHLOROPLASTIC-RELATED"/>
    <property type="match status" value="1"/>
</dbReference>
<dbReference type="Pfam" id="PF02033">
    <property type="entry name" value="RBFA"/>
    <property type="match status" value="1"/>
</dbReference>
<dbReference type="SUPFAM" id="SSF89919">
    <property type="entry name" value="Ribosome-binding factor A, RbfA"/>
    <property type="match status" value="1"/>
</dbReference>
<dbReference type="PROSITE" id="PS01319">
    <property type="entry name" value="RBFA"/>
    <property type="match status" value="1"/>
</dbReference>